<dbReference type="EMBL" id="AAFI02000007">
    <property type="protein sequence ID" value="EAL71424.1"/>
    <property type="molecule type" value="Genomic_DNA"/>
</dbReference>
<dbReference type="RefSeq" id="XP_645353.1">
    <property type="nucleotide sequence ID" value="XM_640261.1"/>
</dbReference>
<dbReference type="SMR" id="Q86JP5"/>
<dbReference type="STRING" id="44689.Q86JP5"/>
<dbReference type="PaxDb" id="44689-DDB0230034"/>
<dbReference type="EnsemblProtists" id="EAL71424">
    <property type="protein sequence ID" value="EAL71424"/>
    <property type="gene ID" value="DDB_G0271980"/>
</dbReference>
<dbReference type="GeneID" id="8618241"/>
<dbReference type="KEGG" id="ddi:DDB_G0271980"/>
<dbReference type="dictyBase" id="DDB_G0271980">
    <property type="gene designation" value="rabR"/>
</dbReference>
<dbReference type="VEuPathDB" id="AmoebaDB:DDB_G0271980"/>
<dbReference type="eggNOG" id="KOG0084">
    <property type="taxonomic scope" value="Eukaryota"/>
</dbReference>
<dbReference type="HOGENOM" id="CLU_907400_0_0_1"/>
<dbReference type="InParanoid" id="Q86JP5"/>
<dbReference type="PhylomeDB" id="Q86JP5"/>
<dbReference type="Reactome" id="R-DDI-6798695">
    <property type="pathway name" value="Neutrophil degranulation"/>
</dbReference>
<dbReference type="Reactome" id="R-DDI-8873719">
    <property type="pathway name" value="RAB geranylgeranylation"/>
</dbReference>
<dbReference type="PRO" id="PR:Q86JP5"/>
<dbReference type="Proteomes" id="UP000002195">
    <property type="component" value="Chromosome 2"/>
</dbReference>
<dbReference type="GO" id="GO:0005886">
    <property type="term" value="C:plasma membrane"/>
    <property type="evidence" value="ECO:0007669"/>
    <property type="project" value="UniProtKB-SubCell"/>
</dbReference>
<dbReference type="GO" id="GO:0005525">
    <property type="term" value="F:GTP binding"/>
    <property type="evidence" value="ECO:0000318"/>
    <property type="project" value="GO_Central"/>
</dbReference>
<dbReference type="GO" id="GO:0003924">
    <property type="term" value="F:GTPase activity"/>
    <property type="evidence" value="ECO:0000318"/>
    <property type="project" value="GO_Central"/>
</dbReference>
<dbReference type="GO" id="GO:0006972">
    <property type="term" value="P:hyperosmotic response"/>
    <property type="evidence" value="ECO:0000270"/>
    <property type="project" value="dictyBase"/>
</dbReference>
<dbReference type="GO" id="GO:0006909">
    <property type="term" value="P:phagocytosis"/>
    <property type="evidence" value="ECO:0007007"/>
    <property type="project" value="dictyBase"/>
</dbReference>
<dbReference type="GO" id="GO:0016192">
    <property type="term" value="P:vesicle-mediated transport"/>
    <property type="evidence" value="ECO:0000318"/>
    <property type="project" value="GO_Central"/>
</dbReference>
<dbReference type="CDD" id="cd00154">
    <property type="entry name" value="Rab"/>
    <property type="match status" value="1"/>
</dbReference>
<dbReference type="Gene3D" id="3.40.50.300">
    <property type="entry name" value="P-loop containing nucleotide triphosphate hydrolases"/>
    <property type="match status" value="1"/>
</dbReference>
<dbReference type="InterPro" id="IPR027417">
    <property type="entry name" value="P-loop_NTPase"/>
</dbReference>
<dbReference type="InterPro" id="IPR050227">
    <property type="entry name" value="Rab"/>
</dbReference>
<dbReference type="InterPro" id="IPR001806">
    <property type="entry name" value="Small_GTPase"/>
</dbReference>
<dbReference type="PANTHER" id="PTHR47977">
    <property type="entry name" value="RAS-RELATED PROTEIN RAB"/>
    <property type="match status" value="1"/>
</dbReference>
<dbReference type="Pfam" id="PF00071">
    <property type="entry name" value="Ras"/>
    <property type="match status" value="2"/>
</dbReference>
<dbReference type="PRINTS" id="PR00449">
    <property type="entry name" value="RASTRNSFRMNG"/>
</dbReference>
<dbReference type="SMART" id="SM00175">
    <property type="entry name" value="RAB"/>
    <property type="match status" value="1"/>
</dbReference>
<dbReference type="SMART" id="SM00173">
    <property type="entry name" value="RAS"/>
    <property type="match status" value="1"/>
</dbReference>
<dbReference type="SUPFAM" id="SSF52540">
    <property type="entry name" value="P-loop containing nucleoside triphosphate hydrolases"/>
    <property type="match status" value="1"/>
</dbReference>
<dbReference type="PROSITE" id="PS51419">
    <property type="entry name" value="RAB"/>
    <property type="match status" value="1"/>
</dbReference>
<evidence type="ECO:0000250" key="1"/>
<evidence type="ECO:0000255" key="2"/>
<evidence type="ECO:0000256" key="3">
    <source>
        <dbReference type="SAM" id="MobiDB-lite"/>
    </source>
</evidence>
<evidence type="ECO:0000305" key="4"/>
<comment type="subcellular location">
    <subcellularLocation>
        <location evidence="4">Cell membrane</location>
        <topology evidence="4">Lipid-anchor</topology>
        <orientation evidence="4">Cytoplasmic side</orientation>
    </subcellularLocation>
</comment>
<comment type="similarity">
    <text evidence="4">Belongs to the small GTPase superfamily. Rab family.</text>
</comment>
<gene>
    <name type="primary">rabR</name>
    <name type="ORF">DDB_G0271980</name>
</gene>
<protein>
    <recommendedName>
        <fullName>Ras-related protein RabR</fullName>
    </recommendedName>
</protein>
<keyword id="KW-1003">Cell membrane</keyword>
<keyword id="KW-0342">GTP-binding</keyword>
<keyword id="KW-0449">Lipoprotein</keyword>
<keyword id="KW-0472">Membrane</keyword>
<keyword id="KW-0488">Methylation</keyword>
<keyword id="KW-0547">Nucleotide-binding</keyword>
<keyword id="KW-0636">Prenylation</keyword>
<keyword id="KW-1185">Reference proteome</keyword>
<feature type="chain" id="PRO_0000332767" description="Ras-related protein RabR">
    <location>
        <begin position="1"/>
        <end position="304"/>
    </location>
</feature>
<feature type="propeptide" id="PRO_0000370835" description="Removed in mature form" evidence="2">
    <location>
        <begin position="305"/>
        <end position="307"/>
    </location>
</feature>
<feature type="region of interest" description="Disordered" evidence="3">
    <location>
        <begin position="1"/>
        <end position="45"/>
    </location>
</feature>
<feature type="region of interest" description="Disordered" evidence="3">
    <location>
        <begin position="175"/>
        <end position="223"/>
    </location>
</feature>
<feature type="short sequence motif" description="Effector region" evidence="1">
    <location>
        <begin position="83"/>
        <end position="92"/>
    </location>
</feature>
<feature type="compositionally biased region" description="Polar residues" evidence="3">
    <location>
        <begin position="1"/>
        <end position="10"/>
    </location>
</feature>
<feature type="compositionally biased region" description="Low complexity" evidence="3">
    <location>
        <begin position="11"/>
        <end position="45"/>
    </location>
</feature>
<feature type="compositionally biased region" description="Low complexity" evidence="3">
    <location>
        <begin position="175"/>
        <end position="185"/>
    </location>
</feature>
<feature type="compositionally biased region" description="Polar residues" evidence="3">
    <location>
        <begin position="186"/>
        <end position="202"/>
    </location>
</feature>
<feature type="binding site" evidence="1">
    <location>
        <begin position="61"/>
        <end position="68"/>
    </location>
    <ligand>
        <name>GTP</name>
        <dbReference type="ChEBI" id="CHEBI:37565"/>
    </ligand>
</feature>
<feature type="binding site" evidence="1">
    <location>
        <begin position="122"/>
        <end position="126"/>
    </location>
    <ligand>
        <name>GTP</name>
        <dbReference type="ChEBI" id="CHEBI:37565"/>
    </ligand>
</feature>
<feature type="binding site" evidence="1">
    <location>
        <begin position="230"/>
        <end position="233"/>
    </location>
    <ligand>
        <name>GTP</name>
        <dbReference type="ChEBI" id="CHEBI:37565"/>
    </ligand>
</feature>
<feature type="modified residue" description="Cysteine methyl ester" evidence="2">
    <location>
        <position position="304"/>
    </location>
</feature>
<feature type="lipid moiety-binding region" description="S-geranylgeranyl cysteine" evidence="1">
    <location>
        <position position="304"/>
    </location>
</feature>
<reference key="1">
    <citation type="journal article" date="2002" name="Nature">
        <title>Sequence and analysis of chromosome 2 of Dictyostelium discoideum.</title>
        <authorList>
            <person name="Gloeckner G."/>
            <person name="Eichinger L."/>
            <person name="Szafranski K."/>
            <person name="Pachebat J.A."/>
            <person name="Bankier A.T."/>
            <person name="Dear P.H."/>
            <person name="Lehmann R."/>
            <person name="Baumgart C."/>
            <person name="Parra G."/>
            <person name="Abril J.F."/>
            <person name="Guigo R."/>
            <person name="Kumpf K."/>
            <person name="Tunggal B."/>
            <person name="Cox E.C."/>
            <person name="Quail M.A."/>
            <person name="Platzer M."/>
            <person name="Rosenthal A."/>
            <person name="Noegel A.A."/>
        </authorList>
    </citation>
    <scope>NUCLEOTIDE SEQUENCE [LARGE SCALE GENOMIC DNA]</scope>
    <source>
        <strain>AX4</strain>
    </source>
</reference>
<reference key="2">
    <citation type="journal article" date="2005" name="Nature">
        <title>The genome of the social amoeba Dictyostelium discoideum.</title>
        <authorList>
            <person name="Eichinger L."/>
            <person name="Pachebat J.A."/>
            <person name="Gloeckner G."/>
            <person name="Rajandream M.A."/>
            <person name="Sucgang R."/>
            <person name="Berriman M."/>
            <person name="Song J."/>
            <person name="Olsen R."/>
            <person name="Szafranski K."/>
            <person name="Xu Q."/>
            <person name="Tunggal B."/>
            <person name="Kummerfeld S."/>
            <person name="Madera M."/>
            <person name="Konfortov B.A."/>
            <person name="Rivero F."/>
            <person name="Bankier A.T."/>
            <person name="Lehmann R."/>
            <person name="Hamlin N."/>
            <person name="Davies R."/>
            <person name="Gaudet P."/>
            <person name="Fey P."/>
            <person name="Pilcher K."/>
            <person name="Chen G."/>
            <person name="Saunders D."/>
            <person name="Sodergren E.J."/>
            <person name="Davis P."/>
            <person name="Kerhornou A."/>
            <person name="Nie X."/>
            <person name="Hall N."/>
            <person name="Anjard C."/>
            <person name="Hemphill L."/>
            <person name="Bason N."/>
            <person name="Farbrother P."/>
            <person name="Desany B."/>
            <person name="Just E."/>
            <person name="Morio T."/>
            <person name="Rost R."/>
            <person name="Churcher C.M."/>
            <person name="Cooper J."/>
            <person name="Haydock S."/>
            <person name="van Driessche N."/>
            <person name="Cronin A."/>
            <person name="Goodhead I."/>
            <person name="Muzny D.M."/>
            <person name="Mourier T."/>
            <person name="Pain A."/>
            <person name="Lu M."/>
            <person name="Harper D."/>
            <person name="Lindsay R."/>
            <person name="Hauser H."/>
            <person name="James K.D."/>
            <person name="Quiles M."/>
            <person name="Madan Babu M."/>
            <person name="Saito T."/>
            <person name="Buchrieser C."/>
            <person name="Wardroper A."/>
            <person name="Felder M."/>
            <person name="Thangavelu M."/>
            <person name="Johnson D."/>
            <person name="Knights A."/>
            <person name="Loulseged H."/>
            <person name="Mungall K.L."/>
            <person name="Oliver K."/>
            <person name="Price C."/>
            <person name="Quail M.A."/>
            <person name="Urushihara H."/>
            <person name="Hernandez J."/>
            <person name="Rabbinowitsch E."/>
            <person name="Steffen D."/>
            <person name="Sanders M."/>
            <person name="Ma J."/>
            <person name="Kohara Y."/>
            <person name="Sharp S."/>
            <person name="Simmonds M.N."/>
            <person name="Spiegler S."/>
            <person name="Tivey A."/>
            <person name="Sugano S."/>
            <person name="White B."/>
            <person name="Walker D."/>
            <person name="Woodward J.R."/>
            <person name="Winckler T."/>
            <person name="Tanaka Y."/>
            <person name="Shaulsky G."/>
            <person name="Schleicher M."/>
            <person name="Weinstock G.M."/>
            <person name="Rosenthal A."/>
            <person name="Cox E.C."/>
            <person name="Chisholm R.L."/>
            <person name="Gibbs R.A."/>
            <person name="Loomis W.F."/>
            <person name="Platzer M."/>
            <person name="Kay R.R."/>
            <person name="Williams J.G."/>
            <person name="Dear P.H."/>
            <person name="Noegel A.A."/>
            <person name="Barrell B.G."/>
            <person name="Kuspa A."/>
        </authorList>
    </citation>
    <scope>NUCLEOTIDE SEQUENCE [LARGE SCALE GENOMIC DNA]</scope>
    <source>
        <strain>AX4</strain>
    </source>
</reference>
<accession>Q86JP5</accession>
<accession>Q55AB3</accession>
<organism>
    <name type="scientific">Dictyostelium discoideum</name>
    <name type="common">Social amoeba</name>
    <dbReference type="NCBI Taxonomy" id="44689"/>
    <lineage>
        <taxon>Eukaryota</taxon>
        <taxon>Amoebozoa</taxon>
        <taxon>Evosea</taxon>
        <taxon>Eumycetozoa</taxon>
        <taxon>Dictyostelia</taxon>
        <taxon>Dictyosteliales</taxon>
        <taxon>Dictyosteliaceae</taxon>
        <taxon>Dictyostelium</taxon>
    </lineage>
</organism>
<sequence length="307" mass="34800">MTTTTLLSESTNNSNNTNNNTNNNTNNTMNNNNNNNNNNTIGNNNNNNPEYDILINILMLGDEEVGKGSVARRYTEGYFPINENLYNIEVDRKHKDIKDWGDGLIKRKDPNKPVIGRLQLWNFHMHKISDIPTKQQYRETNGFILFFDVTNKSSFLQLSSLIELVRAKCADENNNFNCQSNSRNSTNYNRHSVGNHCPNSPQKGEKENNTHSSTAPPAPPPLPPIVIVGNKCDDVSNTVVDPIAAKKYCDSLSIPLLFISAKTNENVNEAFNILQGLIIKQMKIKERERQKLLKQKHIKKDVNCNLM</sequence>
<name>RABR_DICDI</name>
<proteinExistence type="inferred from homology"/>